<proteinExistence type="evidence at transcript level"/>
<evidence type="ECO:0000255" key="1"/>
<evidence type="ECO:0000255" key="2">
    <source>
        <dbReference type="PROSITE-ProRule" id="PRU01097"/>
    </source>
</evidence>
<evidence type="ECO:0000255" key="3">
    <source>
        <dbReference type="PROSITE-ProRule" id="PRU10062"/>
    </source>
</evidence>
<evidence type="ECO:0000255" key="4">
    <source>
        <dbReference type="PROSITE-ProRule" id="PRU10063"/>
    </source>
</evidence>
<evidence type="ECO:0000303" key="5">
    <source>
    </source>
</evidence>
<evidence type="ECO:0000305" key="6"/>
<evidence type="ECO:0000305" key="7">
    <source>
    </source>
</evidence>
<reference key="1">
    <citation type="journal article" date="1994" name="Mol. Gen. Genet.">
        <title>A novel method for efficient expression cloning of fungal enzyme genes.</title>
        <authorList>
            <person name="Dalboege H."/>
            <person name="Hansen H.P.H."/>
        </authorList>
    </citation>
    <scope>NUCLEOTIDE SEQUENCE [MRNA]</scope>
</reference>
<sequence length="227" mass="25601">MVSLKSVLAAATAVSSAIAAPFDFVPRDNSTALQARQVTPNAEGWHNGYFYSWWSDGGGQVQYTNLEGSRYQVRWRNTGNFVGGKGWNPGTGRTINYGGYFNPQGNGYLAVYGWTRNPLVEYYVIESYGTYNPGSQAQYKGTFYTDGDQYDIFVSTRYNQPSIDGTRTFQQYWSIRKNKRVGGSVNMQNHFNAWQQHGMPLGQHYYQVVATEGYQSSGESDIYVQTH</sequence>
<protein>
    <recommendedName>
        <fullName evidence="5">Endo-1,4-beta-xylanase 1</fullName>
        <shortName evidence="5">Xylanase 1</shortName>
        <ecNumber evidence="7">3.2.1.8</ecNumber>
    </recommendedName>
    <alternativeName>
        <fullName evidence="5">1,4-beta-D-xylan xylanohydrolase 1</fullName>
    </alternativeName>
</protein>
<comment type="catalytic activity">
    <reaction>
        <text>Endohydrolysis of (1-&gt;4)-beta-D-xylosidic linkages in xylans.</text>
        <dbReference type="EC" id="3.2.1.8"/>
    </reaction>
</comment>
<comment type="pathway">
    <text>Glycan degradation; xylan degradation.</text>
</comment>
<comment type="similarity">
    <text evidence="6">Belongs to the glycosyl hydrolase 11 (cellulase G) family.</text>
</comment>
<keyword id="KW-0119">Carbohydrate metabolism</keyword>
<keyword id="KW-0326">Glycosidase</keyword>
<keyword id="KW-0378">Hydrolase</keyword>
<keyword id="KW-0624">Polysaccharide degradation</keyword>
<keyword id="KW-0732">Signal</keyword>
<keyword id="KW-0858">Xylan degradation</keyword>
<dbReference type="EC" id="3.2.1.8" evidence="7"/>
<dbReference type="EMBL" id="X76047">
    <property type="protein sequence ID" value="CAA53632.1"/>
    <property type="molecule type" value="mRNA"/>
</dbReference>
<dbReference type="PIR" id="S43919">
    <property type="entry name" value="S43919"/>
</dbReference>
<dbReference type="SMR" id="P55334"/>
<dbReference type="CAZy" id="GH11">
    <property type="family name" value="Glycoside Hydrolase Family 11"/>
</dbReference>
<dbReference type="UniPathway" id="UPA00114"/>
<dbReference type="GO" id="GO:0031176">
    <property type="term" value="F:endo-1,4-beta-xylanase activity"/>
    <property type="evidence" value="ECO:0007669"/>
    <property type="project" value="UniProtKB-EC"/>
</dbReference>
<dbReference type="GO" id="GO:0045493">
    <property type="term" value="P:xylan catabolic process"/>
    <property type="evidence" value="ECO:0007669"/>
    <property type="project" value="UniProtKB-UniPathway"/>
</dbReference>
<dbReference type="FunFam" id="2.60.120.180:FF:000001">
    <property type="entry name" value="Endo-1,4-beta-xylanase"/>
    <property type="match status" value="1"/>
</dbReference>
<dbReference type="Gene3D" id="2.60.120.180">
    <property type="match status" value="1"/>
</dbReference>
<dbReference type="InterPro" id="IPR013320">
    <property type="entry name" value="ConA-like_dom_sf"/>
</dbReference>
<dbReference type="InterPro" id="IPR013319">
    <property type="entry name" value="GH11/12"/>
</dbReference>
<dbReference type="InterPro" id="IPR018208">
    <property type="entry name" value="GH11_AS_1"/>
</dbReference>
<dbReference type="InterPro" id="IPR033119">
    <property type="entry name" value="GH11_AS_2"/>
</dbReference>
<dbReference type="InterPro" id="IPR033123">
    <property type="entry name" value="GH11_dom"/>
</dbReference>
<dbReference type="InterPro" id="IPR001137">
    <property type="entry name" value="Glyco_hydro_11"/>
</dbReference>
<dbReference type="PANTHER" id="PTHR46828">
    <property type="entry name" value="ENDO-1,4-BETA-XYLANASE A-RELATED"/>
    <property type="match status" value="1"/>
</dbReference>
<dbReference type="PANTHER" id="PTHR46828:SF2">
    <property type="entry name" value="ENDO-1,4-BETA-XYLANASE A-RELATED"/>
    <property type="match status" value="1"/>
</dbReference>
<dbReference type="Pfam" id="PF00457">
    <property type="entry name" value="Glyco_hydro_11"/>
    <property type="match status" value="1"/>
</dbReference>
<dbReference type="PRINTS" id="PR00911">
    <property type="entry name" value="GLHYDRLASE11"/>
</dbReference>
<dbReference type="SUPFAM" id="SSF49899">
    <property type="entry name" value="Concanavalin A-like lectins/glucanases"/>
    <property type="match status" value="1"/>
</dbReference>
<dbReference type="PROSITE" id="PS00776">
    <property type="entry name" value="GH11_1"/>
    <property type="match status" value="1"/>
</dbReference>
<dbReference type="PROSITE" id="PS00777">
    <property type="entry name" value="GH11_2"/>
    <property type="match status" value="1"/>
</dbReference>
<dbReference type="PROSITE" id="PS51761">
    <property type="entry name" value="GH11_3"/>
    <property type="match status" value="1"/>
</dbReference>
<organism>
    <name type="scientific">Humicola insolens</name>
    <name type="common">Soft-rot fungus</name>
    <dbReference type="NCBI Taxonomy" id="85995"/>
    <lineage>
        <taxon>Eukaryota</taxon>
        <taxon>Fungi</taxon>
        <taxon>Dikarya</taxon>
        <taxon>Ascomycota</taxon>
        <taxon>Pezizomycotina</taxon>
        <taxon>Sordariomycetes</taxon>
        <taxon>Sordariomycetidae</taxon>
        <taxon>Sordariales</taxon>
        <taxon>Chaetomiaceae</taxon>
        <taxon>Mycothermus</taxon>
    </lineage>
</organism>
<name>XYN1B_HUMIN</name>
<feature type="signal peptide" evidence="1">
    <location>
        <begin position="1"/>
        <end position="19"/>
    </location>
</feature>
<feature type="chain" id="PRO_0000008007" description="Endo-1,4-beta-xylanase 1">
    <location>
        <begin position="20"/>
        <end position="227"/>
    </location>
</feature>
<feature type="domain" description="GH11" evidence="2">
    <location>
        <begin position="37"/>
        <end position="225"/>
    </location>
</feature>
<feature type="active site" description="Nucleophile" evidence="3">
    <location>
        <position position="121"/>
    </location>
</feature>
<feature type="active site" description="Proton donor" evidence="4">
    <location>
        <position position="212"/>
    </location>
</feature>
<gene>
    <name evidence="5" type="primary">XYL1</name>
</gene>
<accession>P55334</accession>
<accession>Q12625</accession>